<comment type="function">
    <text evidence="1">ATP transporter involved in the uptake of ATP from the host cell cytoplasm. Provides the microsporidian cell with host ATP in exchange for ADP. This is an obligate exchange system. This energy acquiring activity is an important component of microsporidian parasitism (By similarity).</text>
</comment>
<comment type="subcellular location">
    <subcellularLocation>
        <location evidence="1">Cell membrane</location>
        <topology evidence="1">Multi-pass membrane protein</topology>
    </subcellularLocation>
</comment>
<comment type="similarity">
    <text evidence="3">Belongs to the ADP/ATP translocase tlc family.</text>
</comment>
<accession>Q4LCA6</accession>
<reference key="1">
    <citation type="submission" date="2004-12" db="EMBL/GenBank/DDBJ databases">
        <title>The occurrence of protein similar to bacterial-plastidic ATP/ADP translocase is common for microsporidia: encoding genes are present in two distantly related species.</title>
        <authorList>
            <person name="Dolgikh V.V."/>
            <person name="Trezeguet V."/>
            <person name="David C."/>
            <person name="Lauquin G.J.-M."/>
        </authorList>
    </citation>
    <scope>NUCLEOTIDE SEQUENCE [GENOMIC DNA]</scope>
</reference>
<organism>
    <name type="scientific">Paranosema grylli</name>
    <name type="common">Microsporidian parasite</name>
    <name type="synonym">Nosema grylli</name>
    <dbReference type="NCBI Taxonomy" id="235222"/>
    <lineage>
        <taxon>Eukaryota</taxon>
        <taxon>Fungi</taxon>
        <taxon>Fungi incertae sedis</taxon>
        <taxon>Microsporidia</taxon>
        <taxon>Nosematidae</taxon>
        <taxon>Paranosema</taxon>
    </lineage>
</organism>
<name>NTT1_PARGY</name>
<dbReference type="EMBL" id="AJ868111">
    <property type="protein sequence ID" value="CAI30461.1"/>
    <property type="molecule type" value="Genomic_DNA"/>
</dbReference>
<dbReference type="GlyCosmos" id="Q4LCA6">
    <property type="glycosylation" value="4 sites, No reported glycans"/>
</dbReference>
<dbReference type="GO" id="GO:0005886">
    <property type="term" value="C:plasma membrane"/>
    <property type="evidence" value="ECO:0007669"/>
    <property type="project" value="UniProtKB-SubCell"/>
</dbReference>
<dbReference type="GO" id="GO:0005524">
    <property type="term" value="F:ATP binding"/>
    <property type="evidence" value="ECO:0007669"/>
    <property type="project" value="UniProtKB-KW"/>
</dbReference>
<dbReference type="GO" id="GO:0005471">
    <property type="term" value="F:ATP:ADP antiporter activity"/>
    <property type="evidence" value="ECO:0007669"/>
    <property type="project" value="InterPro"/>
</dbReference>
<dbReference type="InterPro" id="IPR004667">
    <property type="entry name" value="ADP_ATP_car_bac_type"/>
</dbReference>
<dbReference type="PANTHER" id="PTHR31187">
    <property type="match status" value="1"/>
</dbReference>
<dbReference type="PANTHER" id="PTHR31187:SF1">
    <property type="entry name" value="ADP,ATP CARRIER PROTEIN 1"/>
    <property type="match status" value="1"/>
</dbReference>
<dbReference type="Pfam" id="PF03219">
    <property type="entry name" value="TLC"/>
    <property type="match status" value="1"/>
</dbReference>
<evidence type="ECO:0000250" key="1"/>
<evidence type="ECO:0000255" key="2"/>
<evidence type="ECO:0000305" key="3"/>
<keyword id="KW-0067">ATP-binding</keyword>
<keyword id="KW-1003">Cell membrane</keyword>
<keyword id="KW-0325">Glycoprotein</keyword>
<keyword id="KW-0472">Membrane</keyword>
<keyword id="KW-0547">Nucleotide-binding</keyword>
<keyword id="KW-0812">Transmembrane</keyword>
<keyword id="KW-1133">Transmembrane helix</keyword>
<keyword id="KW-0813">Transport</keyword>
<protein>
    <recommendedName>
        <fullName>ADP,ATP carrier protein 1</fullName>
    </recommendedName>
    <alternativeName>
        <fullName>ADP/ATP translocase 1</fullName>
    </alternativeName>
    <alternativeName>
        <fullName>Nucleotide transporter 1</fullName>
    </alternativeName>
</protein>
<gene>
    <name type="primary">ANC1</name>
</gene>
<sequence>MTKIENCKSCLPTENEVEEEALSGVTFLGRVFKVARCERPVFTYMSIILFLVSYIYSVSRDMKDAIIIERLDPASIPYLKVLVVLPVNICIVFSIQKILINTSVSKVFSIMCVMFGIYFCLYGTVLMSFRHIFELNEFLIRDWFADDKMVFMGLQWTIALALPVNSWTSSLMYLSAEIWGTVVFQFLFFALSNEIYTQKQSLRFIPLFLVFGNVALIVSGFSMKFIKYVSEQGSYEFTLFFRKLVFVLMGICSFVIYLIHRYFEDNIAHKPLFVTSEASYKQKTKSKIGFMEAMQTMASSRLVLAISFVVIAYSVSVNMVEASFKTCMSQYALQKGAQADFHVMGVQSDIQLAVGALSIILLLSSFPALIRDKGFLYVAFVPPIFCIFGMASVFGMAALNNSARGNRTLLGFVSIGENLWLEQLLGAIIVTGFKILKYSAVDVSKEALSMRINPAYRARFKGIYDGVCGKLGKAIGSGITNMQNVFYNSSDVRKAAISSLTIVTVITACWGFAVRYLAGKYDKSTHSNTDIDIDLINVDPMEKDADDL</sequence>
<feature type="chain" id="PRO_0000382924" description="ADP,ATP carrier protein 1">
    <location>
        <begin position="1"/>
        <end position="548"/>
    </location>
</feature>
<feature type="transmembrane region" description="Helical" evidence="2">
    <location>
        <begin position="39"/>
        <end position="59"/>
    </location>
</feature>
<feature type="transmembrane region" description="Helical" evidence="2">
    <location>
        <begin position="75"/>
        <end position="95"/>
    </location>
</feature>
<feature type="transmembrane region" description="Helical" evidence="2">
    <location>
        <begin position="107"/>
        <end position="127"/>
    </location>
</feature>
<feature type="transmembrane region" description="Helical" evidence="2">
    <location>
        <begin position="149"/>
        <end position="169"/>
    </location>
</feature>
<feature type="transmembrane region" description="Helical" evidence="2">
    <location>
        <begin position="171"/>
        <end position="191"/>
    </location>
</feature>
<feature type="transmembrane region" description="Helical" evidence="2">
    <location>
        <begin position="204"/>
        <end position="224"/>
    </location>
</feature>
<feature type="transmembrane region" description="Helical" evidence="2">
    <location>
        <begin position="239"/>
        <end position="259"/>
    </location>
</feature>
<feature type="transmembrane region" description="Helical" evidence="2">
    <location>
        <begin position="302"/>
        <end position="322"/>
    </location>
</feature>
<feature type="transmembrane region" description="Helical" evidence="2">
    <location>
        <begin position="350"/>
        <end position="370"/>
    </location>
</feature>
<feature type="transmembrane region" description="Helical" evidence="2">
    <location>
        <begin position="374"/>
        <end position="394"/>
    </location>
</feature>
<feature type="transmembrane region" description="Helical" evidence="2">
    <location>
        <begin position="410"/>
        <end position="430"/>
    </location>
</feature>
<feature type="transmembrane region" description="Helical" evidence="2">
    <location>
        <begin position="494"/>
        <end position="514"/>
    </location>
</feature>
<feature type="glycosylation site" description="N-linked (GlcNAc...) asparagine" evidence="2">
    <location>
        <position position="101"/>
    </location>
</feature>
<feature type="glycosylation site" description="N-linked (GlcNAc...) asparagine" evidence="2">
    <location>
        <position position="400"/>
    </location>
</feature>
<feature type="glycosylation site" description="N-linked (GlcNAc...) asparagine" evidence="2">
    <location>
        <position position="406"/>
    </location>
</feature>
<feature type="glycosylation site" description="N-linked (GlcNAc...) asparagine" evidence="2">
    <location>
        <position position="488"/>
    </location>
</feature>
<proteinExistence type="inferred from homology"/>